<organismHost>
    <name type="scientific">Dryophytes versicolor</name>
    <name type="common">chameleon treefrog</name>
    <dbReference type="NCBI Taxonomy" id="30343"/>
</organismHost>
<organismHost>
    <name type="scientific">Lithobates pipiens</name>
    <name type="common">Northern leopard frog</name>
    <name type="synonym">Rana pipiens</name>
    <dbReference type="NCBI Taxonomy" id="8404"/>
</organismHost>
<organismHost>
    <name type="scientific">Lithobates sylvaticus</name>
    <name type="common">Wood frog</name>
    <name type="synonym">Rana sylvatica</name>
    <dbReference type="NCBI Taxonomy" id="45438"/>
</organismHost>
<organismHost>
    <name type="scientific">Notophthalmus viridescens</name>
    <name type="common">Eastern newt</name>
    <name type="synonym">Triturus viridescens</name>
    <dbReference type="NCBI Taxonomy" id="8316"/>
</organismHost>
<reference key="1">
    <citation type="journal article" date="2004" name="Virology">
        <title>Comparative genomic analyses of frog virus 3, type species of the genus Ranavirus (family Iridoviridae).</title>
        <authorList>
            <person name="Tan W.G."/>
            <person name="Barkman T.J."/>
            <person name="Gregory Chinchar V."/>
            <person name="Essani K."/>
        </authorList>
    </citation>
    <scope>NUCLEOTIDE SEQUENCE [LARGE SCALE GENOMIC DNA]</scope>
</reference>
<organism>
    <name type="scientific">Frog virus 3 (isolate Goorha)</name>
    <name type="common">FV-3</name>
    <dbReference type="NCBI Taxonomy" id="654924"/>
    <lineage>
        <taxon>Viruses</taxon>
        <taxon>Varidnaviria</taxon>
        <taxon>Bamfordvirae</taxon>
        <taxon>Nucleocytoviricota</taxon>
        <taxon>Megaviricetes</taxon>
        <taxon>Pimascovirales</taxon>
        <taxon>Iridoviridae</taxon>
        <taxon>Alphairidovirinae</taxon>
        <taxon>Ranavirus</taxon>
        <taxon>Frog virus 3</taxon>
    </lineage>
</organism>
<keyword id="KW-1185">Reference proteome</keyword>
<proteinExistence type="predicted"/>
<feature type="chain" id="PRO_0000410567" description="Uncharacterized protein 035L">
    <location>
        <begin position="1"/>
        <end position="153"/>
    </location>
</feature>
<feature type="region of interest" description="Disordered" evidence="1">
    <location>
        <begin position="24"/>
        <end position="87"/>
    </location>
</feature>
<feature type="region of interest" description="Disordered" evidence="1">
    <location>
        <begin position="101"/>
        <end position="153"/>
    </location>
</feature>
<feature type="compositionally biased region" description="Low complexity" evidence="1">
    <location>
        <begin position="27"/>
        <end position="37"/>
    </location>
</feature>
<feature type="compositionally biased region" description="Basic and acidic residues" evidence="1">
    <location>
        <begin position="143"/>
        <end position="153"/>
    </location>
</feature>
<name>035L_FRG3G</name>
<gene>
    <name type="ORF">FV3-035L</name>
</gene>
<protein>
    <recommendedName>
        <fullName>Uncharacterized protein 035L</fullName>
    </recommendedName>
</protein>
<dbReference type="EMBL" id="AY548484">
    <property type="protein sequence ID" value="AAT09694.1"/>
    <property type="molecule type" value="Genomic_DNA"/>
</dbReference>
<dbReference type="RefSeq" id="YP_031613.1">
    <property type="nucleotide sequence ID" value="NC_005946.1"/>
</dbReference>
<dbReference type="KEGG" id="vg:2947814"/>
<dbReference type="Proteomes" id="UP000008770">
    <property type="component" value="Segment"/>
</dbReference>
<sequence length="153" mass="17285">MIWVWPATGRGPGWWGIRRDPWGPEDSSCPCPRLPLSPTGPVGHSGPMGQCHPPVPSYRRGRRDQKDPPLRRQTSPPLPPHPWDRPLPWVPWIPLDLCRHGDPRHPWDPGAQSGYPRVREVRGVPADRPLRPCPRQGPRTAATRKESSCRIPS</sequence>
<accession>Q6GZU1</accession>
<evidence type="ECO:0000256" key="1">
    <source>
        <dbReference type="SAM" id="MobiDB-lite"/>
    </source>
</evidence>